<keyword id="KW-0479">Metal-binding</keyword>
<keyword id="KW-0507">mRNA processing</keyword>
<keyword id="KW-0508">mRNA splicing</keyword>
<keyword id="KW-0539">Nucleus</keyword>
<keyword id="KW-1185">Reference proteome</keyword>
<keyword id="KW-0694">RNA-binding</keyword>
<keyword id="KW-0747">Spliceosome</keyword>
<keyword id="KW-0862">Zinc</keyword>
<keyword id="KW-0863">Zinc-finger</keyword>
<dbReference type="EMBL" id="AE017341">
    <property type="protein sequence ID" value="AAW41099.1"/>
    <property type="molecule type" value="Genomic_DNA"/>
</dbReference>
<dbReference type="RefSeq" id="XP_566918.1">
    <property type="nucleotide sequence ID" value="XM_566918.1"/>
</dbReference>
<dbReference type="SMR" id="P0CR50"/>
<dbReference type="FunCoup" id="P0CR50">
    <property type="interactions" value="730"/>
</dbReference>
<dbReference type="STRING" id="214684.P0CR50"/>
<dbReference type="PaxDb" id="214684-P0CR50"/>
<dbReference type="EnsemblFungi" id="AAW41099">
    <property type="protein sequence ID" value="AAW41099"/>
    <property type="gene ID" value="CNA06890"/>
</dbReference>
<dbReference type="GeneID" id="3253274"/>
<dbReference type="KEGG" id="cne:CNA06890"/>
<dbReference type="VEuPathDB" id="FungiDB:CNA06890"/>
<dbReference type="eggNOG" id="KOG0153">
    <property type="taxonomic scope" value="Eukaryota"/>
</dbReference>
<dbReference type="HOGENOM" id="CLU_027112_0_0_1"/>
<dbReference type="InParanoid" id="P0CR50"/>
<dbReference type="OMA" id="CPLRVQW"/>
<dbReference type="OrthoDB" id="10259600at2759"/>
<dbReference type="Proteomes" id="UP000002149">
    <property type="component" value="Chromosome 1"/>
</dbReference>
<dbReference type="GO" id="GO:0000974">
    <property type="term" value="C:Prp19 complex"/>
    <property type="evidence" value="ECO:0000318"/>
    <property type="project" value="GO_Central"/>
</dbReference>
<dbReference type="GO" id="GO:0071006">
    <property type="term" value="C:U2-type catalytic step 1 spliceosome"/>
    <property type="evidence" value="ECO:0000318"/>
    <property type="project" value="GO_Central"/>
</dbReference>
<dbReference type="GO" id="GO:0071007">
    <property type="term" value="C:U2-type catalytic step 2 spliceosome"/>
    <property type="evidence" value="ECO:0000318"/>
    <property type="project" value="GO_Central"/>
</dbReference>
<dbReference type="GO" id="GO:0036002">
    <property type="term" value="F:pre-mRNA binding"/>
    <property type="evidence" value="ECO:0000318"/>
    <property type="project" value="GO_Central"/>
</dbReference>
<dbReference type="GO" id="GO:0017070">
    <property type="term" value="F:U6 snRNA binding"/>
    <property type="evidence" value="ECO:0000318"/>
    <property type="project" value="GO_Central"/>
</dbReference>
<dbReference type="GO" id="GO:0008270">
    <property type="term" value="F:zinc ion binding"/>
    <property type="evidence" value="ECO:0007669"/>
    <property type="project" value="UniProtKB-KW"/>
</dbReference>
<dbReference type="GO" id="GO:0006397">
    <property type="term" value="P:mRNA processing"/>
    <property type="evidence" value="ECO:0007669"/>
    <property type="project" value="UniProtKB-KW"/>
</dbReference>
<dbReference type="GO" id="GO:0008380">
    <property type="term" value="P:RNA splicing"/>
    <property type="evidence" value="ECO:0007669"/>
    <property type="project" value="UniProtKB-KW"/>
</dbReference>
<dbReference type="FunFam" id="4.10.1000.10:FF:000006">
    <property type="entry name" value="Putative pre-mrna-splicing factor rbm22"/>
    <property type="match status" value="1"/>
</dbReference>
<dbReference type="Gene3D" id="3.30.70.330">
    <property type="match status" value="1"/>
</dbReference>
<dbReference type="Gene3D" id="4.10.1000.10">
    <property type="entry name" value="Zinc finger, CCCH-type"/>
    <property type="match status" value="1"/>
</dbReference>
<dbReference type="InterPro" id="IPR039171">
    <property type="entry name" value="Cwc2/Slt11"/>
</dbReference>
<dbReference type="InterPro" id="IPR012677">
    <property type="entry name" value="Nucleotide-bd_a/b_plait_sf"/>
</dbReference>
<dbReference type="InterPro" id="IPR048995">
    <property type="entry name" value="STL11/RBM22-like_N"/>
</dbReference>
<dbReference type="InterPro" id="IPR032297">
    <property type="entry name" value="Torus"/>
</dbReference>
<dbReference type="InterPro" id="IPR000571">
    <property type="entry name" value="Znf_CCCH"/>
</dbReference>
<dbReference type="InterPro" id="IPR036855">
    <property type="entry name" value="Znf_CCCH_sf"/>
</dbReference>
<dbReference type="PANTHER" id="PTHR14089">
    <property type="entry name" value="PRE-MRNA-SPLICING FACTOR RBM22"/>
    <property type="match status" value="1"/>
</dbReference>
<dbReference type="PANTHER" id="PTHR14089:SF6">
    <property type="entry name" value="PRE-MRNA-SPLICING FACTOR RBM22"/>
    <property type="match status" value="1"/>
</dbReference>
<dbReference type="Pfam" id="PF21369">
    <property type="entry name" value="STL11_N"/>
    <property type="match status" value="1"/>
</dbReference>
<dbReference type="Pfam" id="PF16131">
    <property type="entry name" value="Torus"/>
    <property type="match status" value="1"/>
</dbReference>
<dbReference type="SMART" id="SM00356">
    <property type="entry name" value="ZnF_C3H1"/>
    <property type="match status" value="1"/>
</dbReference>
<dbReference type="SUPFAM" id="SSF90229">
    <property type="entry name" value="CCCH zinc finger"/>
    <property type="match status" value="1"/>
</dbReference>
<dbReference type="PROSITE" id="PS50103">
    <property type="entry name" value="ZF_C3H1"/>
    <property type="match status" value="1"/>
</dbReference>
<evidence type="ECO:0000250" key="1"/>
<evidence type="ECO:0000255" key="2">
    <source>
        <dbReference type="PROSITE-ProRule" id="PRU00723"/>
    </source>
</evidence>
<evidence type="ECO:0000305" key="3"/>
<proteinExistence type="inferred from homology"/>
<sequence>MPAKHDINKVGVESSDFPILCETCLGPNPYVRMNKQEFGHECKVCNRPFTVFRWNPGEGRMKKTEICTTCAKIKGVCQTCLLDLEFGLPTQVRDAALARKAQAPSSDINKQYYIQNLEAQMAESPDGLAYDSEVANRAGREMLKNLARTDPYYKRNRPHICSFFVKGECKRGAECPFRHEMPKENETQKPSQQSLVDRYYGRNDPVAKKILSQNAESKGLKAPEDKSITTLLFLGLPQCNDSHVRASLVGACPFVKPSDVKSISIVEASHCAFVNFNQRSMAERAADALAAQGGIEVEGKKAKIVWGRARPQKKAAAAVEGSAAPA</sequence>
<reference key="1">
    <citation type="journal article" date="2005" name="Science">
        <title>The genome of the basidiomycetous yeast and human pathogen Cryptococcus neoformans.</title>
        <authorList>
            <person name="Loftus B.J."/>
            <person name="Fung E."/>
            <person name="Roncaglia P."/>
            <person name="Rowley D."/>
            <person name="Amedeo P."/>
            <person name="Bruno D."/>
            <person name="Vamathevan J."/>
            <person name="Miranda M."/>
            <person name="Anderson I.J."/>
            <person name="Fraser J.A."/>
            <person name="Allen J.E."/>
            <person name="Bosdet I.E."/>
            <person name="Brent M.R."/>
            <person name="Chiu R."/>
            <person name="Doering T.L."/>
            <person name="Donlin M.J."/>
            <person name="D'Souza C.A."/>
            <person name="Fox D.S."/>
            <person name="Grinberg V."/>
            <person name="Fu J."/>
            <person name="Fukushima M."/>
            <person name="Haas B.J."/>
            <person name="Huang J.C."/>
            <person name="Janbon G."/>
            <person name="Jones S.J.M."/>
            <person name="Koo H.L."/>
            <person name="Krzywinski M.I."/>
            <person name="Kwon-Chung K.J."/>
            <person name="Lengeler K.B."/>
            <person name="Maiti R."/>
            <person name="Marra M.A."/>
            <person name="Marra R.E."/>
            <person name="Mathewson C.A."/>
            <person name="Mitchell T.G."/>
            <person name="Pertea M."/>
            <person name="Riggs F.R."/>
            <person name="Salzberg S.L."/>
            <person name="Schein J.E."/>
            <person name="Shvartsbeyn A."/>
            <person name="Shin H."/>
            <person name="Shumway M."/>
            <person name="Specht C.A."/>
            <person name="Suh B.B."/>
            <person name="Tenney A."/>
            <person name="Utterback T.R."/>
            <person name="Wickes B.L."/>
            <person name="Wortman J.R."/>
            <person name="Wye N.H."/>
            <person name="Kronstad J.W."/>
            <person name="Lodge J.K."/>
            <person name="Heitman J."/>
            <person name="Davis R.W."/>
            <person name="Fraser C.M."/>
            <person name="Hyman R.W."/>
        </authorList>
    </citation>
    <scope>NUCLEOTIDE SEQUENCE [LARGE SCALE GENOMIC DNA]</scope>
    <source>
        <strain>JEC21 / ATCC MYA-565</strain>
    </source>
</reference>
<comment type="function">
    <text evidence="1">Involved in pre-mRNA splicing. Facilitates the cooperative formation of U2/U6 helix II in association with stem II in the spliceosome. Binds to RNA (By similarity).</text>
</comment>
<comment type="subunit">
    <text evidence="1">Associated with the spliceosome.</text>
</comment>
<comment type="subcellular location">
    <subcellularLocation>
        <location evidence="1">Nucleus</location>
    </subcellularLocation>
</comment>
<comment type="similarity">
    <text evidence="3">Belongs to the SLT11 family.</text>
</comment>
<name>SLT11_CRYNJ</name>
<feature type="chain" id="PRO_0000212425" description="Pre-mRNA-splicing factor SLT11">
    <location>
        <begin position="1"/>
        <end position="326"/>
    </location>
</feature>
<feature type="zinc finger region" description="C3H1-type" evidence="2">
    <location>
        <begin position="155"/>
        <end position="182"/>
    </location>
</feature>
<protein>
    <recommendedName>
        <fullName>Pre-mRNA-splicing factor SLT11</fullName>
    </recommendedName>
</protein>
<gene>
    <name type="primary">SLT11</name>
    <name type="ordered locus">CNA06890</name>
</gene>
<accession>P0CR50</accession>
<accession>Q55Z17</accession>
<accession>Q5KND3</accession>
<organism>
    <name type="scientific">Cryptococcus neoformans var. neoformans serotype D (strain JEC21 / ATCC MYA-565)</name>
    <name type="common">Filobasidiella neoformans</name>
    <dbReference type="NCBI Taxonomy" id="214684"/>
    <lineage>
        <taxon>Eukaryota</taxon>
        <taxon>Fungi</taxon>
        <taxon>Dikarya</taxon>
        <taxon>Basidiomycota</taxon>
        <taxon>Agaricomycotina</taxon>
        <taxon>Tremellomycetes</taxon>
        <taxon>Tremellales</taxon>
        <taxon>Cryptococcaceae</taxon>
        <taxon>Cryptococcus</taxon>
        <taxon>Cryptococcus neoformans species complex</taxon>
    </lineage>
</organism>